<dbReference type="EMBL" id="X62339">
    <property type="protein sequence ID" value="CAA44214.1"/>
    <property type="molecule type" value="mRNA"/>
</dbReference>
<dbReference type="EMBL" id="X62368">
    <property type="protein sequence ID" value="CAA44226.1"/>
    <property type="status" value="ALT_SEQ"/>
    <property type="molecule type" value="mRNA"/>
</dbReference>
<dbReference type="PIR" id="S21061">
    <property type="entry name" value="S21061"/>
</dbReference>
<dbReference type="RefSeq" id="XP_016442894.1">
    <property type="nucleotide sequence ID" value="XM_016587408.1"/>
</dbReference>
<dbReference type="SMR" id="P24929"/>
<dbReference type="STRING" id="4097.P24929"/>
<dbReference type="PaxDb" id="4097-P24929"/>
<dbReference type="KEGG" id="nta:107768292"/>
<dbReference type="OMA" id="FPIHGHR"/>
<dbReference type="OrthoDB" id="250175at2759"/>
<dbReference type="Proteomes" id="UP000084051">
    <property type="component" value="Unplaced"/>
</dbReference>
<dbReference type="GO" id="GO:0009507">
    <property type="term" value="C:chloroplast"/>
    <property type="evidence" value="ECO:0007669"/>
    <property type="project" value="UniProtKB-SubCell"/>
</dbReference>
<dbReference type="GO" id="GO:1990904">
    <property type="term" value="C:ribonucleoprotein complex"/>
    <property type="evidence" value="ECO:0007669"/>
    <property type="project" value="UniProtKB-KW"/>
</dbReference>
<dbReference type="GO" id="GO:0005840">
    <property type="term" value="C:ribosome"/>
    <property type="evidence" value="ECO:0007669"/>
    <property type="project" value="UniProtKB-KW"/>
</dbReference>
<dbReference type="GO" id="GO:0003729">
    <property type="term" value="F:mRNA binding"/>
    <property type="evidence" value="ECO:0000318"/>
    <property type="project" value="GO_Central"/>
</dbReference>
<dbReference type="GO" id="GO:0003735">
    <property type="term" value="F:structural constituent of ribosome"/>
    <property type="evidence" value="ECO:0000318"/>
    <property type="project" value="GO_Central"/>
</dbReference>
<dbReference type="GO" id="GO:0006412">
    <property type="term" value="P:translation"/>
    <property type="evidence" value="ECO:0000318"/>
    <property type="project" value="GO_Central"/>
</dbReference>
<dbReference type="CDD" id="cd00387">
    <property type="entry name" value="Ribosomal_L7_L12"/>
    <property type="match status" value="1"/>
</dbReference>
<dbReference type="FunFam" id="3.30.1390.10:FF:000001">
    <property type="entry name" value="50S ribosomal protein L7/L12"/>
    <property type="match status" value="1"/>
</dbReference>
<dbReference type="Gene3D" id="3.30.1390.10">
    <property type="match status" value="1"/>
</dbReference>
<dbReference type="Gene3D" id="1.20.5.710">
    <property type="entry name" value="Single helix bin"/>
    <property type="match status" value="1"/>
</dbReference>
<dbReference type="HAMAP" id="MF_00368">
    <property type="entry name" value="Ribosomal_bL12"/>
    <property type="match status" value="1"/>
</dbReference>
<dbReference type="InterPro" id="IPR000206">
    <property type="entry name" value="Ribosomal_bL12"/>
</dbReference>
<dbReference type="InterPro" id="IPR013823">
    <property type="entry name" value="Ribosomal_bL12_C"/>
</dbReference>
<dbReference type="InterPro" id="IPR014719">
    <property type="entry name" value="Ribosomal_bL12_C/ClpS-like"/>
</dbReference>
<dbReference type="InterPro" id="IPR008932">
    <property type="entry name" value="Ribosomal_bL12_oligo"/>
</dbReference>
<dbReference type="InterPro" id="IPR036235">
    <property type="entry name" value="Ribosomal_bL12_oligo_N_sf"/>
</dbReference>
<dbReference type="NCBIfam" id="TIGR00855">
    <property type="entry name" value="L12"/>
    <property type="match status" value="1"/>
</dbReference>
<dbReference type="PANTHER" id="PTHR45987">
    <property type="entry name" value="39S RIBOSOMAL PROTEIN L12"/>
    <property type="match status" value="1"/>
</dbReference>
<dbReference type="PANTHER" id="PTHR45987:SF26">
    <property type="entry name" value="LARGE RIBOSOMAL SUBUNIT PROTEIN BL12CX-RELATED"/>
    <property type="match status" value="1"/>
</dbReference>
<dbReference type="Pfam" id="PF00542">
    <property type="entry name" value="Ribosomal_L12"/>
    <property type="match status" value="1"/>
</dbReference>
<dbReference type="Pfam" id="PF16320">
    <property type="entry name" value="Ribosomal_L12_N"/>
    <property type="match status" value="1"/>
</dbReference>
<dbReference type="SUPFAM" id="SSF54736">
    <property type="entry name" value="ClpS-like"/>
    <property type="match status" value="1"/>
</dbReference>
<dbReference type="SUPFAM" id="SSF48300">
    <property type="entry name" value="Ribosomal protein L7/12, oligomerisation (N-terminal) domain"/>
    <property type="match status" value="1"/>
</dbReference>
<protein>
    <recommendedName>
        <fullName evidence="3">Large ribosomal subunit protein bL12c</fullName>
    </recommendedName>
    <alternativeName>
        <fullName>50S ribosomal protein L12, chloroplastic</fullName>
    </alternativeName>
    <alternativeName>
        <fullName>CL12</fullName>
    </alternativeName>
</protein>
<gene>
    <name type="primary">RPL12</name>
</gene>
<reference key="1">
    <citation type="journal article" date="1992" name="Nucleic Acids Res.">
        <title>Nuclear-encoded chloroplast ribosomal protein L12 of Nicotiana tabacum: characterization of mature protein and isolation and sequence analysis of cDNA clones encoding its cytoplasmic precursor.</title>
        <authorList>
            <person name="Elhag G.A."/>
            <person name="Thomas F.J."/>
            <person name="McCreery T.P."/>
            <person name="Bourque D.P."/>
        </authorList>
    </citation>
    <scope>NUCLEOTIDE SEQUENCE [MRNA]</scope>
    <scope>PROTEIN SEQUENCE OF 54-65</scope>
    <source>
        <strain>cv. Petit Havana</strain>
        <tissue>Leaf</tissue>
    </source>
</reference>
<organism>
    <name type="scientific">Nicotiana tabacum</name>
    <name type="common">Common tobacco</name>
    <dbReference type="NCBI Taxonomy" id="4097"/>
    <lineage>
        <taxon>Eukaryota</taxon>
        <taxon>Viridiplantae</taxon>
        <taxon>Streptophyta</taxon>
        <taxon>Embryophyta</taxon>
        <taxon>Tracheophyta</taxon>
        <taxon>Spermatophyta</taxon>
        <taxon>Magnoliopsida</taxon>
        <taxon>eudicotyledons</taxon>
        <taxon>Gunneridae</taxon>
        <taxon>Pentapetalae</taxon>
        <taxon>asterids</taxon>
        <taxon>lamiids</taxon>
        <taxon>Solanales</taxon>
        <taxon>Solanaceae</taxon>
        <taxon>Nicotianoideae</taxon>
        <taxon>Nicotianeae</taxon>
        <taxon>Nicotiana</taxon>
    </lineage>
</organism>
<name>RK12_TOBAC</name>
<feature type="transit peptide" description="Chloroplast" evidence="2">
    <location>
        <begin position="1"/>
        <end position="53"/>
    </location>
</feature>
<feature type="chain" id="PRO_0000030456" description="Large ribosomal subunit protein bL12c">
    <location>
        <begin position="54"/>
        <end position="186"/>
    </location>
</feature>
<feature type="region of interest" description="Disordered" evidence="1">
    <location>
        <begin position="1"/>
        <end position="23"/>
    </location>
</feature>
<feature type="region of interest" description="Disordered" evidence="1">
    <location>
        <begin position="162"/>
        <end position="186"/>
    </location>
</feature>
<feature type="compositionally biased region" description="Polar residues" evidence="1">
    <location>
        <begin position="1"/>
        <end position="11"/>
    </location>
</feature>
<feature type="compositionally biased region" description="Low complexity" evidence="1">
    <location>
        <begin position="12"/>
        <end position="23"/>
    </location>
</feature>
<feature type="compositionally biased region" description="Basic and acidic residues" evidence="1">
    <location>
        <begin position="162"/>
        <end position="180"/>
    </location>
</feature>
<accession>P24929</accession>
<evidence type="ECO:0000256" key="1">
    <source>
        <dbReference type="SAM" id="MobiDB-lite"/>
    </source>
</evidence>
<evidence type="ECO:0000269" key="2">
    <source>
    </source>
</evidence>
<evidence type="ECO:0000305" key="3"/>
<sequence length="186" mass="19647">MASTLSTITLRSPSPSTASSTHASIPFPKKALEFPIRTPKLHHRRATFLRPLAAVEAPEKVVQLGDEISNLTLADAQKLVEYLQDKLGVTAASFAPAAVAAAPGAAAEAPAVVEEKTEFDVVIDEVPSNARIATIKAVRALTSLALKEAKELIEGLPKKFKEGVSKDEAEDAKKQLEEAGAKVSIA</sequence>
<comment type="subcellular location">
    <subcellularLocation>
        <location>Plastid</location>
        <location>Chloroplast</location>
    </subcellularLocation>
</comment>
<comment type="similarity">
    <text evidence="3">Belongs to the bacterial ribosomal protein bL12 family.</text>
</comment>
<comment type="sequence caution" evidence="3">
    <conflict type="erroneous termination">
        <sequence resource="EMBL-CDS" id="CAA44226"/>
    </conflict>
    <text>Extended C-terminus.</text>
</comment>
<proteinExistence type="evidence at protein level"/>
<keyword id="KW-0150">Chloroplast</keyword>
<keyword id="KW-0903">Direct protein sequencing</keyword>
<keyword id="KW-0934">Plastid</keyword>
<keyword id="KW-1185">Reference proteome</keyword>
<keyword id="KW-0687">Ribonucleoprotein</keyword>
<keyword id="KW-0689">Ribosomal protein</keyword>
<keyword id="KW-0809">Transit peptide</keyword>